<proteinExistence type="uncertain"/>
<name>TRY6_HUMAN</name>
<keyword id="KW-0106">Calcium</keyword>
<keyword id="KW-1015">Disulfide bond</keyword>
<keyword id="KW-0378">Hydrolase</keyword>
<keyword id="KW-0479">Metal-binding</keyword>
<keyword id="KW-0645">Protease</keyword>
<keyword id="KW-1267">Proteomics identification</keyword>
<keyword id="KW-1185">Reference proteome</keyword>
<keyword id="KW-0964">Secreted</keyword>
<keyword id="KW-0720">Serine protease</keyword>
<keyword id="KW-0732">Signal</keyword>
<keyword id="KW-0865">Zymogen</keyword>
<sequence>MNPLLILAFVGAAVAVPFDDDDKIVGGYTCEENSVPYQVSLNSGSHFCGGSLISEQWVVSAGHCYKPHIQVRLGEHNIEVLEGNEQFINAAKIIRHPKYNRIILNNDIMLIKLSTPAVINAHVSTISLPTAPPAAGTECLISGWGNTLSSGADYPDELQCLDAPVLTQAKCKASYPLKITSNMFCVGFLEGGKDSCQGDSGGPVVCNGQLQGIVSWGYGCAQKRRPGVYTKVYNYVDWIKDTIAANS</sequence>
<feature type="signal peptide" evidence="2">
    <location>
        <begin position="1"/>
        <end position="15"/>
    </location>
</feature>
<feature type="chain" id="PRO_0000337059" description="Putative trypsin-6">
    <location>
        <begin position="16"/>
        <end position="247"/>
    </location>
</feature>
<feature type="domain" description="Peptidase S1" evidence="3">
    <location>
        <begin position="24"/>
        <end position="244"/>
    </location>
</feature>
<feature type="active site" description="Charge relay system" evidence="1">
    <location>
        <position position="63"/>
    </location>
</feature>
<feature type="active site" description="Charge relay system" evidence="1">
    <location>
        <position position="107"/>
    </location>
</feature>
<feature type="active site" description="Charge relay system" evidence="1">
    <location>
        <position position="200"/>
    </location>
</feature>
<feature type="binding site" evidence="1">
    <location>
        <position position="75"/>
    </location>
    <ligand>
        <name>Ca(2+)</name>
        <dbReference type="ChEBI" id="CHEBI:29108"/>
    </ligand>
</feature>
<feature type="binding site" evidence="1">
    <location>
        <position position="77"/>
    </location>
    <ligand>
        <name>Ca(2+)</name>
        <dbReference type="ChEBI" id="CHEBI:29108"/>
    </ligand>
</feature>
<feature type="binding site" evidence="1">
    <location>
        <position position="80"/>
    </location>
    <ligand>
        <name>Ca(2+)</name>
        <dbReference type="ChEBI" id="CHEBI:29108"/>
    </ligand>
</feature>
<feature type="binding site" evidence="1">
    <location>
        <position position="85"/>
    </location>
    <ligand>
        <name>Ca(2+)</name>
        <dbReference type="ChEBI" id="CHEBI:29108"/>
    </ligand>
</feature>
<feature type="site" description="Required for specificity" evidence="1">
    <location>
        <position position="194"/>
    </location>
</feature>
<feature type="disulfide bond" evidence="3">
    <location>
        <begin position="48"/>
        <end position="64"/>
    </location>
</feature>
<feature type="disulfide bond" evidence="3">
    <location>
        <begin position="139"/>
        <end position="206"/>
    </location>
</feature>
<feature type="disulfide bond" evidence="3">
    <location>
        <begin position="171"/>
        <end position="185"/>
    </location>
</feature>
<feature type="disulfide bond" evidence="3">
    <location>
        <begin position="196"/>
        <end position="220"/>
    </location>
</feature>
<feature type="sequence conflict" description="In Ref. 2; AAC80208." evidence="5" ref="2">
    <original>I</original>
    <variation>T</variation>
    <location>
        <position position="103"/>
    </location>
</feature>
<feature type="sequence conflict" description="In Ref. 2; AAC80208." evidence="5" ref="2">
    <original>N</original>
    <variation>K</variation>
    <location>
        <position position="182"/>
    </location>
</feature>
<protein>
    <recommendedName>
        <fullName>Putative trypsin-6</fullName>
        <ecNumber>3.4.21.4</ecNumber>
    </recommendedName>
    <alternativeName>
        <fullName>Serine protease 3 pseudogene 2</fullName>
    </alternativeName>
    <alternativeName>
        <fullName>Trypsinogen C</fullName>
    </alternativeName>
</protein>
<organism>
    <name type="scientific">Homo sapiens</name>
    <name type="common">Human</name>
    <dbReference type="NCBI Taxonomy" id="9606"/>
    <lineage>
        <taxon>Eukaryota</taxon>
        <taxon>Metazoa</taxon>
        <taxon>Chordata</taxon>
        <taxon>Craniata</taxon>
        <taxon>Vertebrata</taxon>
        <taxon>Euteleostomi</taxon>
        <taxon>Mammalia</taxon>
        <taxon>Eutheria</taxon>
        <taxon>Euarchontoglires</taxon>
        <taxon>Primates</taxon>
        <taxon>Haplorrhini</taxon>
        <taxon>Catarrhini</taxon>
        <taxon>Hominidae</taxon>
        <taxon>Homo</taxon>
    </lineage>
</organism>
<dbReference type="EC" id="3.4.21.4"/>
<dbReference type="EMBL" id="AC231380">
    <property type="status" value="NOT_ANNOTATED_CDS"/>
    <property type="molecule type" value="Genomic_DNA"/>
</dbReference>
<dbReference type="EMBL" id="L36092">
    <property type="protein sequence ID" value="AAC80208.1"/>
    <property type="molecule type" value="Genomic_DNA"/>
</dbReference>
<dbReference type="SMR" id="Q8NHM4"/>
<dbReference type="FunCoup" id="Q8NHM4">
    <property type="interactions" value="274"/>
</dbReference>
<dbReference type="IntAct" id="Q8NHM4">
    <property type="interactions" value="3"/>
</dbReference>
<dbReference type="MEROPS" id="S01.298"/>
<dbReference type="iPTMnet" id="Q8NHM4"/>
<dbReference type="PhosphoSitePlus" id="Q8NHM4"/>
<dbReference type="BioMuta" id="HGNC:43788"/>
<dbReference type="DMDM" id="74760358"/>
<dbReference type="jPOST" id="Q8NHM4"/>
<dbReference type="MassIVE" id="Q8NHM4"/>
<dbReference type="ProteomicsDB" id="73722"/>
<dbReference type="Pumba" id="Q8NHM4"/>
<dbReference type="AGR" id="HGNC:43788"/>
<dbReference type="GeneCards" id="PRSS3P2"/>
<dbReference type="HGNC" id="HGNC:43788">
    <property type="gene designation" value="PRSS3P2"/>
</dbReference>
<dbReference type="neXtProt" id="NX_Q8NHM4"/>
<dbReference type="InParanoid" id="Q8NHM4"/>
<dbReference type="PAN-GO" id="Q8NHM4">
    <property type="GO annotations" value="3 GO annotations based on evolutionary models"/>
</dbReference>
<dbReference type="PathwayCommons" id="Q8NHM4"/>
<dbReference type="SignaLink" id="Q8NHM4"/>
<dbReference type="Pharos" id="Q8NHM4">
    <property type="development level" value="Tdark"/>
</dbReference>
<dbReference type="Proteomes" id="UP000005640">
    <property type="component" value="Unplaced"/>
</dbReference>
<dbReference type="RNAct" id="Q8NHM4">
    <property type="molecule type" value="protein"/>
</dbReference>
<dbReference type="GO" id="GO:0005615">
    <property type="term" value="C:extracellular space"/>
    <property type="evidence" value="ECO:0000318"/>
    <property type="project" value="GO_Central"/>
</dbReference>
<dbReference type="GO" id="GO:0046872">
    <property type="term" value="F:metal ion binding"/>
    <property type="evidence" value="ECO:0007669"/>
    <property type="project" value="UniProtKB-KW"/>
</dbReference>
<dbReference type="GO" id="GO:0004252">
    <property type="term" value="F:serine-type endopeptidase activity"/>
    <property type="evidence" value="ECO:0000318"/>
    <property type="project" value="GO_Central"/>
</dbReference>
<dbReference type="GO" id="GO:0043542">
    <property type="term" value="P:endothelial cell migration"/>
    <property type="evidence" value="ECO:0000315"/>
    <property type="project" value="UniProtKB"/>
</dbReference>
<dbReference type="GO" id="GO:0006508">
    <property type="term" value="P:proteolysis"/>
    <property type="evidence" value="ECO:0007669"/>
    <property type="project" value="UniProtKB-KW"/>
</dbReference>
<dbReference type="CDD" id="cd00190">
    <property type="entry name" value="Tryp_SPc"/>
    <property type="match status" value="1"/>
</dbReference>
<dbReference type="FunFam" id="2.40.10.10:FF:000019">
    <property type="entry name" value="Anionic trypsin"/>
    <property type="match status" value="1"/>
</dbReference>
<dbReference type="Gene3D" id="2.40.10.10">
    <property type="entry name" value="Trypsin-like serine proteases"/>
    <property type="match status" value="2"/>
</dbReference>
<dbReference type="InterPro" id="IPR009003">
    <property type="entry name" value="Peptidase_S1_PA"/>
</dbReference>
<dbReference type="InterPro" id="IPR043504">
    <property type="entry name" value="Peptidase_S1_PA_chymotrypsin"/>
</dbReference>
<dbReference type="InterPro" id="IPR001314">
    <property type="entry name" value="Peptidase_S1A"/>
</dbReference>
<dbReference type="InterPro" id="IPR050127">
    <property type="entry name" value="Serine_Proteases_S1"/>
</dbReference>
<dbReference type="InterPro" id="IPR001254">
    <property type="entry name" value="Trypsin_dom"/>
</dbReference>
<dbReference type="InterPro" id="IPR018114">
    <property type="entry name" value="TRYPSIN_HIS"/>
</dbReference>
<dbReference type="InterPro" id="IPR033116">
    <property type="entry name" value="TRYPSIN_SER"/>
</dbReference>
<dbReference type="PANTHER" id="PTHR24264:SF64">
    <property type="entry name" value="TRYPSIN-6-RELATED"/>
    <property type="match status" value="1"/>
</dbReference>
<dbReference type="PANTHER" id="PTHR24264">
    <property type="entry name" value="TRYPSIN-RELATED"/>
    <property type="match status" value="1"/>
</dbReference>
<dbReference type="Pfam" id="PF00089">
    <property type="entry name" value="Trypsin"/>
    <property type="match status" value="1"/>
</dbReference>
<dbReference type="PRINTS" id="PR00722">
    <property type="entry name" value="CHYMOTRYPSIN"/>
</dbReference>
<dbReference type="SMART" id="SM00020">
    <property type="entry name" value="Tryp_SPc"/>
    <property type="match status" value="1"/>
</dbReference>
<dbReference type="SUPFAM" id="SSF50494">
    <property type="entry name" value="Trypsin-like serine proteases"/>
    <property type="match status" value="1"/>
</dbReference>
<dbReference type="PROSITE" id="PS50240">
    <property type="entry name" value="TRYPSIN_DOM"/>
    <property type="match status" value="1"/>
</dbReference>
<dbReference type="PROSITE" id="PS00134">
    <property type="entry name" value="TRYPSIN_HIS"/>
    <property type="match status" value="1"/>
</dbReference>
<dbReference type="PROSITE" id="PS00135">
    <property type="entry name" value="TRYPSIN_SER"/>
    <property type="match status" value="1"/>
</dbReference>
<gene>
    <name type="primary">PRSS3P2</name>
    <name type="synonym">T6</name>
    <name type="synonym">TRY6</name>
</gene>
<accession>Q8NHM4</accession>
<evidence type="ECO:0000250" key="1"/>
<evidence type="ECO:0000255" key="2"/>
<evidence type="ECO:0000255" key="3">
    <source>
        <dbReference type="PROSITE-ProRule" id="PRU00274"/>
    </source>
</evidence>
<evidence type="ECO:0000269" key="4">
    <source>
    </source>
</evidence>
<evidence type="ECO:0000305" key="5"/>
<evidence type="ECO:0000305" key="6">
    <source>
    </source>
</evidence>
<reference key="1">
    <citation type="journal article" date="2003" name="Nature">
        <title>The DNA sequence of human chromosome 7.</title>
        <authorList>
            <person name="Hillier L.W."/>
            <person name="Fulton R.S."/>
            <person name="Fulton L.A."/>
            <person name="Graves T.A."/>
            <person name="Pepin K.H."/>
            <person name="Wagner-McPherson C."/>
            <person name="Layman D."/>
            <person name="Maas J."/>
            <person name="Jaeger S."/>
            <person name="Walker R."/>
            <person name="Wylie K."/>
            <person name="Sekhon M."/>
            <person name="Becker M.C."/>
            <person name="O'Laughlin M.D."/>
            <person name="Schaller M.E."/>
            <person name="Fewell G.A."/>
            <person name="Delehaunty K.D."/>
            <person name="Miner T.L."/>
            <person name="Nash W.E."/>
            <person name="Cordes M."/>
            <person name="Du H."/>
            <person name="Sun H."/>
            <person name="Edwards J."/>
            <person name="Bradshaw-Cordum H."/>
            <person name="Ali J."/>
            <person name="Andrews S."/>
            <person name="Isak A."/>
            <person name="Vanbrunt A."/>
            <person name="Nguyen C."/>
            <person name="Du F."/>
            <person name="Lamar B."/>
            <person name="Courtney L."/>
            <person name="Kalicki J."/>
            <person name="Ozersky P."/>
            <person name="Bielicki L."/>
            <person name="Scott K."/>
            <person name="Holmes A."/>
            <person name="Harkins R."/>
            <person name="Harris A."/>
            <person name="Strong C.M."/>
            <person name="Hou S."/>
            <person name="Tomlinson C."/>
            <person name="Dauphin-Kohlberg S."/>
            <person name="Kozlowicz-Reilly A."/>
            <person name="Leonard S."/>
            <person name="Rohlfing T."/>
            <person name="Rock S.M."/>
            <person name="Tin-Wollam A.-M."/>
            <person name="Abbott A."/>
            <person name="Minx P."/>
            <person name="Maupin R."/>
            <person name="Strowmatt C."/>
            <person name="Latreille P."/>
            <person name="Miller N."/>
            <person name="Johnson D."/>
            <person name="Murray J."/>
            <person name="Woessner J.P."/>
            <person name="Wendl M.C."/>
            <person name="Yang S.-P."/>
            <person name="Schultz B.R."/>
            <person name="Wallis J.W."/>
            <person name="Spieth J."/>
            <person name="Bieri T.A."/>
            <person name="Nelson J.O."/>
            <person name="Berkowicz N."/>
            <person name="Wohldmann P.E."/>
            <person name="Cook L.L."/>
            <person name="Hickenbotham M.T."/>
            <person name="Eldred J."/>
            <person name="Williams D."/>
            <person name="Bedell J.A."/>
            <person name="Mardis E.R."/>
            <person name="Clifton S.W."/>
            <person name="Chissoe S.L."/>
            <person name="Marra M.A."/>
            <person name="Raymond C."/>
            <person name="Haugen E."/>
            <person name="Gillett W."/>
            <person name="Zhou Y."/>
            <person name="James R."/>
            <person name="Phelps K."/>
            <person name="Iadanoto S."/>
            <person name="Bubb K."/>
            <person name="Simms E."/>
            <person name="Levy R."/>
            <person name="Clendenning J."/>
            <person name="Kaul R."/>
            <person name="Kent W.J."/>
            <person name="Furey T.S."/>
            <person name="Baertsch R.A."/>
            <person name="Brent M.R."/>
            <person name="Keibler E."/>
            <person name="Flicek P."/>
            <person name="Bork P."/>
            <person name="Suyama M."/>
            <person name="Bailey J.A."/>
            <person name="Portnoy M.E."/>
            <person name="Torrents D."/>
            <person name="Chinwalla A.T."/>
            <person name="Gish W.R."/>
            <person name="Eddy S.R."/>
            <person name="McPherson J.D."/>
            <person name="Olson M.V."/>
            <person name="Eichler E.E."/>
            <person name="Green E.D."/>
            <person name="Waterston R.H."/>
            <person name="Wilson R.K."/>
        </authorList>
    </citation>
    <scope>NUCLEOTIDE SEQUENCE [LARGE SCALE GENOMIC DNA]</scope>
</reference>
<reference key="2">
    <citation type="journal article" date="1996" name="Science">
        <title>The complete 685-kilobase DNA sequence of the human beta T cell receptor locus.</title>
        <authorList>
            <person name="Rowen L."/>
            <person name="Koop B.F."/>
            <person name="Hood L."/>
        </authorList>
    </citation>
    <scope>NUCLEOTIDE SEQUENCE [GENOMIC DNA]</scope>
</reference>
<reference key="3">
    <citation type="journal article" date="2004" name="Cancer Res.">
        <title>S100 family members and trypsinogens are predictors of distant metastasis and survival in early-stage non-small cell lung cancer.</title>
        <authorList>
            <person name="Diederichs S."/>
            <person name="Bulk E."/>
            <person name="Steffen B."/>
            <person name="Ji P."/>
            <person name="Tickenbrock L."/>
            <person name="Lang K."/>
            <person name="Zanker K.S."/>
            <person name="Metzger R."/>
            <person name="Schneider P.M."/>
            <person name="Gerke V."/>
            <person name="Thomas M."/>
            <person name="Berdel W.E."/>
            <person name="Serve H."/>
            <person name="Muller-Tidow C."/>
        </authorList>
    </citation>
    <scope>FUNCTION</scope>
    <scope>TISSUE SPECIFICITY</scope>
</reference>
<comment type="function">
    <text evidence="4">May regulate cell migration.</text>
</comment>
<comment type="catalytic activity">
    <reaction>
        <text>Preferential cleavage: Arg-|-Xaa, Lys-|-Xaa.</text>
        <dbReference type="EC" id="3.4.21.4"/>
    </reaction>
</comment>
<comment type="subcellular location">
    <subcellularLocation>
        <location evidence="5">Secreted</location>
    </subcellularLocation>
</comment>
<comment type="tissue specificity">
    <text evidence="4">Overexpressed in metastasing in non small cell lung tumors, leading to an enhanced cell migration.</text>
</comment>
<comment type="similarity">
    <text evidence="3">Belongs to the peptidase S1 family. Tryptase subfamily.</text>
</comment>
<comment type="caution">
    <text evidence="6">Could be the product of a pseudogene. However, some data suggest that it could be a protein-coding gene (PubMed:15313892).</text>
</comment>